<sequence>MDFNLNDEQELFVAGIRELMASENWEAYFAECDRDSVYPERFVKALADMGIDSLLIPEEHGGLEAGFVTVAAVWMELGRLGAPTYVLYQLPGGFNTFLREGTQEQIDKIMAFRGTGKQMWNSAITEPGAGSDVGSLKTTYTRKNGKVYLNGSKCFITSSAYTPYIVVMARDGASPDKPVYTEWFVDMSKAGIKVNKLEKLGLRMDSCCEITFDDVELDEKDMFGREGNGFNRVKEEFDHERFLVALTNYGTAMCAFEDAARYANQRVQFGEAIGRFQLIQEKFAHMAIKLNSMKNMLLEAAWKADNGTITSGDAAMCKYFCANAAFEVVDTAMQVLGGVGIAGNHRITRFWRDLRVDRVSGGSDEMQILTLGRAVLKQYR</sequence>
<protein>
    <recommendedName>
        <fullName evidence="1">Crotonobetainyl-CoA reductase</fullName>
        <ecNumber evidence="1">1.3.8.13</ecNumber>
    </recommendedName>
    <alternativeName>
        <fullName evidence="1">Crotonobetainyl-CoA dehydrogenase</fullName>
    </alternativeName>
</protein>
<gene>
    <name evidence="1" type="primary">caiA</name>
    <name type="ordered locus">STM0073</name>
</gene>
<accession>Q8ZRX2</accession>
<reference key="1">
    <citation type="journal article" date="2001" name="Nature">
        <title>Complete genome sequence of Salmonella enterica serovar Typhimurium LT2.</title>
        <authorList>
            <person name="McClelland M."/>
            <person name="Sanderson K.E."/>
            <person name="Spieth J."/>
            <person name="Clifton S.W."/>
            <person name="Latreille P."/>
            <person name="Courtney L."/>
            <person name="Porwollik S."/>
            <person name="Ali J."/>
            <person name="Dante M."/>
            <person name="Du F."/>
            <person name="Hou S."/>
            <person name="Layman D."/>
            <person name="Leonard S."/>
            <person name="Nguyen C."/>
            <person name="Scott K."/>
            <person name="Holmes A."/>
            <person name="Grewal N."/>
            <person name="Mulvaney E."/>
            <person name="Ryan E."/>
            <person name="Sun H."/>
            <person name="Florea L."/>
            <person name="Miller W."/>
            <person name="Stoneking T."/>
            <person name="Nhan M."/>
            <person name="Waterston R."/>
            <person name="Wilson R.K."/>
        </authorList>
    </citation>
    <scope>NUCLEOTIDE SEQUENCE [LARGE SCALE GENOMIC DNA]</scope>
    <source>
        <strain>LT2 / SGSC1412 / ATCC 700720</strain>
    </source>
</reference>
<comment type="function">
    <text evidence="1">Catalyzes the reduction of crotonobetainyl-CoA to gamma-butyrobetainyl-CoA.</text>
</comment>
<comment type="catalytic activity">
    <reaction evidence="1">
        <text>4-(trimethylamino)butanoyl-CoA + oxidized [electron-transfer flavoprotein] + H(+) = crotonobetainyl-CoA + reduced [electron-transfer flavoprotein]</text>
        <dbReference type="Rhea" id="RHEA:51584"/>
        <dbReference type="Rhea" id="RHEA-COMP:10685"/>
        <dbReference type="Rhea" id="RHEA-COMP:10686"/>
        <dbReference type="ChEBI" id="CHEBI:15378"/>
        <dbReference type="ChEBI" id="CHEBI:57692"/>
        <dbReference type="ChEBI" id="CHEBI:58307"/>
        <dbReference type="ChEBI" id="CHEBI:60933"/>
        <dbReference type="ChEBI" id="CHEBI:61513"/>
        <dbReference type="EC" id="1.3.8.13"/>
    </reaction>
</comment>
<comment type="cofactor">
    <cofactor evidence="1">
        <name>FAD</name>
        <dbReference type="ChEBI" id="CHEBI:57692"/>
    </cofactor>
</comment>
<comment type="pathway">
    <text evidence="1">Amine and polyamine metabolism; carnitine metabolism.</text>
</comment>
<comment type="subunit">
    <text evidence="1">Homotetramer.</text>
</comment>
<comment type="subcellular location">
    <subcellularLocation>
        <location evidence="1">Cytoplasm</location>
    </subcellularLocation>
</comment>
<comment type="similarity">
    <text evidence="1">Belongs to the acyl-CoA dehydrogenase family.</text>
</comment>
<keyword id="KW-0963">Cytoplasm</keyword>
<keyword id="KW-0274">FAD</keyword>
<keyword id="KW-0285">Flavoprotein</keyword>
<keyword id="KW-0560">Oxidoreductase</keyword>
<keyword id="KW-1185">Reference proteome</keyword>
<feature type="chain" id="PRO_0000201198" description="Crotonobetainyl-CoA reductase">
    <location>
        <begin position="1"/>
        <end position="380"/>
    </location>
</feature>
<name>CAIA_SALTY</name>
<evidence type="ECO:0000255" key="1">
    <source>
        <dbReference type="HAMAP-Rule" id="MF_01052"/>
    </source>
</evidence>
<proteinExistence type="inferred from homology"/>
<organism>
    <name type="scientific">Salmonella typhimurium (strain LT2 / SGSC1412 / ATCC 700720)</name>
    <dbReference type="NCBI Taxonomy" id="99287"/>
    <lineage>
        <taxon>Bacteria</taxon>
        <taxon>Pseudomonadati</taxon>
        <taxon>Pseudomonadota</taxon>
        <taxon>Gammaproteobacteria</taxon>
        <taxon>Enterobacterales</taxon>
        <taxon>Enterobacteriaceae</taxon>
        <taxon>Salmonella</taxon>
    </lineage>
</organism>
<dbReference type="EC" id="1.3.8.13" evidence="1"/>
<dbReference type="EMBL" id="AE006468">
    <property type="protein sequence ID" value="AAL19037.1"/>
    <property type="molecule type" value="Genomic_DNA"/>
</dbReference>
<dbReference type="RefSeq" id="NP_459078.1">
    <property type="nucleotide sequence ID" value="NC_003197.2"/>
</dbReference>
<dbReference type="RefSeq" id="WP_000347134.1">
    <property type="nucleotide sequence ID" value="NC_003197.2"/>
</dbReference>
<dbReference type="SMR" id="Q8ZRX2"/>
<dbReference type="STRING" id="99287.STM0073"/>
<dbReference type="PaxDb" id="99287-STM0073"/>
<dbReference type="GeneID" id="1251591"/>
<dbReference type="GeneID" id="44979088"/>
<dbReference type="KEGG" id="stm:STM0073"/>
<dbReference type="PATRIC" id="fig|99287.12.peg.75"/>
<dbReference type="HOGENOM" id="CLU_018204_0_2_6"/>
<dbReference type="OMA" id="DAMFSYC"/>
<dbReference type="PhylomeDB" id="Q8ZRX2"/>
<dbReference type="BioCyc" id="SENT99287:STM0073-MONOMER"/>
<dbReference type="UniPathway" id="UPA00117"/>
<dbReference type="Proteomes" id="UP000001014">
    <property type="component" value="Chromosome"/>
</dbReference>
<dbReference type="GO" id="GO:0005737">
    <property type="term" value="C:cytoplasm"/>
    <property type="evidence" value="ECO:0000318"/>
    <property type="project" value="GO_Central"/>
</dbReference>
<dbReference type="GO" id="GO:0003995">
    <property type="term" value="F:acyl-CoA dehydrogenase activity"/>
    <property type="evidence" value="ECO:0000318"/>
    <property type="project" value="GO_Central"/>
</dbReference>
<dbReference type="GO" id="GO:0050660">
    <property type="term" value="F:flavin adenine dinucleotide binding"/>
    <property type="evidence" value="ECO:0007669"/>
    <property type="project" value="InterPro"/>
</dbReference>
<dbReference type="GO" id="GO:0009437">
    <property type="term" value="P:carnitine metabolic process"/>
    <property type="evidence" value="ECO:0007669"/>
    <property type="project" value="UniProtKB-UniRule"/>
</dbReference>
<dbReference type="GO" id="GO:0033539">
    <property type="term" value="P:fatty acid beta-oxidation using acyl-CoA dehydrogenase"/>
    <property type="evidence" value="ECO:0000318"/>
    <property type="project" value="GO_Central"/>
</dbReference>
<dbReference type="CDD" id="cd00567">
    <property type="entry name" value="ACAD"/>
    <property type="match status" value="1"/>
</dbReference>
<dbReference type="FunFam" id="1.20.140.10:FF:000001">
    <property type="entry name" value="Acyl-CoA dehydrogenase"/>
    <property type="match status" value="1"/>
</dbReference>
<dbReference type="FunFam" id="2.40.110.10:FF:000002">
    <property type="entry name" value="Acyl-CoA dehydrogenase fadE12"/>
    <property type="match status" value="1"/>
</dbReference>
<dbReference type="FunFam" id="1.10.540.10:FF:000005">
    <property type="entry name" value="Crotonobetainyl-CoA reductase"/>
    <property type="match status" value="1"/>
</dbReference>
<dbReference type="Gene3D" id="1.10.540.10">
    <property type="entry name" value="Acyl-CoA dehydrogenase/oxidase, N-terminal domain"/>
    <property type="match status" value="1"/>
</dbReference>
<dbReference type="Gene3D" id="2.40.110.10">
    <property type="entry name" value="Butyryl-CoA Dehydrogenase, subunit A, domain 2"/>
    <property type="match status" value="1"/>
</dbReference>
<dbReference type="Gene3D" id="1.20.140.10">
    <property type="entry name" value="Butyryl-CoA Dehydrogenase, subunit A, domain 3"/>
    <property type="match status" value="1"/>
</dbReference>
<dbReference type="HAMAP" id="MF_01052">
    <property type="entry name" value="CaiA"/>
    <property type="match status" value="1"/>
</dbReference>
<dbReference type="InterPro" id="IPR006089">
    <property type="entry name" value="Acyl-CoA_DH_CS"/>
</dbReference>
<dbReference type="InterPro" id="IPR006091">
    <property type="entry name" value="Acyl-CoA_Oxase/DH_mid-dom"/>
</dbReference>
<dbReference type="InterPro" id="IPR046373">
    <property type="entry name" value="Acyl-CoA_Oxase/DH_mid-dom_sf"/>
</dbReference>
<dbReference type="InterPro" id="IPR036250">
    <property type="entry name" value="AcylCo_DH-like_C"/>
</dbReference>
<dbReference type="InterPro" id="IPR009075">
    <property type="entry name" value="AcylCo_DH/oxidase_C"/>
</dbReference>
<dbReference type="InterPro" id="IPR013786">
    <property type="entry name" value="AcylCoA_DH/ox_N"/>
</dbReference>
<dbReference type="InterPro" id="IPR037069">
    <property type="entry name" value="AcylCoA_DH/ox_N_sf"/>
</dbReference>
<dbReference type="InterPro" id="IPR009100">
    <property type="entry name" value="AcylCoA_DH/oxidase_NM_dom_sf"/>
</dbReference>
<dbReference type="InterPro" id="IPR023450">
    <property type="entry name" value="CaiA"/>
</dbReference>
<dbReference type="NCBIfam" id="NF002885">
    <property type="entry name" value="PRK03354.1"/>
    <property type="match status" value="1"/>
</dbReference>
<dbReference type="PANTHER" id="PTHR43884">
    <property type="entry name" value="ACYL-COA DEHYDROGENASE"/>
    <property type="match status" value="1"/>
</dbReference>
<dbReference type="PANTHER" id="PTHR43884:SF12">
    <property type="entry name" value="ISOVALERYL-COA DEHYDROGENASE, MITOCHONDRIAL-RELATED"/>
    <property type="match status" value="1"/>
</dbReference>
<dbReference type="Pfam" id="PF00441">
    <property type="entry name" value="Acyl-CoA_dh_1"/>
    <property type="match status" value="1"/>
</dbReference>
<dbReference type="Pfam" id="PF02770">
    <property type="entry name" value="Acyl-CoA_dh_M"/>
    <property type="match status" value="1"/>
</dbReference>
<dbReference type="Pfam" id="PF02771">
    <property type="entry name" value="Acyl-CoA_dh_N"/>
    <property type="match status" value="1"/>
</dbReference>
<dbReference type="PIRSF" id="PIRSF016578">
    <property type="entry name" value="HsaA"/>
    <property type="match status" value="1"/>
</dbReference>
<dbReference type="SUPFAM" id="SSF47203">
    <property type="entry name" value="Acyl-CoA dehydrogenase C-terminal domain-like"/>
    <property type="match status" value="1"/>
</dbReference>
<dbReference type="SUPFAM" id="SSF56645">
    <property type="entry name" value="Acyl-CoA dehydrogenase NM domain-like"/>
    <property type="match status" value="1"/>
</dbReference>
<dbReference type="PROSITE" id="PS00072">
    <property type="entry name" value="ACYL_COA_DH_1"/>
    <property type="match status" value="1"/>
</dbReference>
<dbReference type="PROSITE" id="PS00073">
    <property type="entry name" value="ACYL_COA_DH_2"/>
    <property type="match status" value="1"/>
</dbReference>